<dbReference type="EMBL" id="AY681342">
    <property type="protein sequence ID" value="AAU93683.1"/>
    <property type="molecule type" value="mRNA"/>
</dbReference>
<dbReference type="SMR" id="Q5Y4U3"/>
<dbReference type="ArachnoServer" id="AS000071">
    <property type="toxin name" value="U9-agatoxin-Ao1a"/>
</dbReference>
<dbReference type="GO" id="GO:0005576">
    <property type="term" value="C:extracellular region"/>
    <property type="evidence" value="ECO:0007669"/>
    <property type="project" value="UniProtKB-SubCell"/>
</dbReference>
<dbReference type="GO" id="GO:0090729">
    <property type="term" value="F:toxin activity"/>
    <property type="evidence" value="ECO:0007669"/>
    <property type="project" value="UniProtKB-KW"/>
</dbReference>
<dbReference type="InterPro" id="IPR013605">
    <property type="entry name" value="Toxin_34"/>
</dbReference>
<dbReference type="Pfam" id="PF08396">
    <property type="entry name" value="Toxin_34"/>
    <property type="match status" value="1"/>
</dbReference>
<sequence length="110" mass="11866">MKLLLAIAGLFLVQTLAEDVRAHEESSFLAAVAPEEQRACIKEGEKCAGDCQCCGKWSYCSCPLFGALGCSCIIGDAMVCVRKKKECRTSDVMNTPPGGCFSSSKRRHGR</sequence>
<comment type="subcellular location">
    <subcellularLocation>
        <location evidence="1">Secreted</location>
    </subcellularLocation>
</comment>
<comment type="tissue specificity">
    <text>Expressed by the venom gland.</text>
</comment>
<comment type="domain">
    <text evidence="3">The presence of a 'disulfide through disulfide knot' structurally defines this protein as a knottin.</text>
</comment>
<comment type="similarity">
    <text>Belongs to the neurotoxin 37 family.</text>
</comment>
<organism>
    <name type="scientific">Agelena orientalis</name>
    <name type="common">Funnel-web spider</name>
    <dbReference type="NCBI Taxonomy" id="293813"/>
    <lineage>
        <taxon>Eukaryota</taxon>
        <taxon>Metazoa</taxon>
        <taxon>Ecdysozoa</taxon>
        <taxon>Arthropoda</taxon>
        <taxon>Chelicerata</taxon>
        <taxon>Arachnida</taxon>
        <taxon>Araneae</taxon>
        <taxon>Araneomorphae</taxon>
        <taxon>Entelegynae</taxon>
        <taxon>Agelenidae</taxon>
        <taxon>Agelena</taxon>
    </lineage>
</organism>
<protein>
    <recommendedName>
        <fullName>U9-agatoxin-Ao1a</fullName>
        <shortName>U9-AGTX-Ao1a</shortName>
    </recommendedName>
    <alternativeName>
        <fullName>AgorTX_B7a</fullName>
    </alternativeName>
</protein>
<name>TXAG9_AGEOR</name>
<feature type="signal peptide" evidence="2">
    <location>
        <begin position="1"/>
        <end position="17"/>
    </location>
</feature>
<feature type="propeptide" id="PRO_5000093685" evidence="2">
    <location>
        <begin position="18"/>
        <end position="38"/>
    </location>
</feature>
<feature type="chain" id="PRO_5000093686" description="U9-agatoxin-Ao1a">
    <location>
        <begin position="39"/>
        <end position="108"/>
    </location>
</feature>
<feature type="disulfide bond" evidence="1">
    <location>
        <begin position="40"/>
        <end position="54"/>
    </location>
</feature>
<feature type="disulfide bond" evidence="1">
    <location>
        <begin position="47"/>
        <end position="60"/>
    </location>
</feature>
<feature type="disulfide bond" evidence="1">
    <location>
        <begin position="51"/>
        <end position="87"/>
    </location>
</feature>
<feature type="disulfide bond" evidence="1">
    <location>
        <begin position="53"/>
        <end position="72"/>
    </location>
</feature>
<feature type="disulfide bond" evidence="1">
    <location>
        <begin position="62"/>
        <end position="70"/>
    </location>
</feature>
<proteinExistence type="evidence at transcript level"/>
<keyword id="KW-1015">Disulfide bond</keyword>
<keyword id="KW-0960">Knottin</keyword>
<keyword id="KW-0964">Secreted</keyword>
<keyword id="KW-0732">Signal</keyword>
<keyword id="KW-0800">Toxin</keyword>
<evidence type="ECO:0000250" key="1"/>
<evidence type="ECO:0000255" key="2"/>
<evidence type="ECO:0000305" key="3"/>
<accession>Q5Y4U3</accession>
<reference key="1">
    <citation type="journal article" date="2005" name="Proteins">
        <title>A novel strategy for the identification of toxinlike structures in spider venom.</title>
        <authorList>
            <person name="Kozlov S.A."/>
            <person name="Malyavka A."/>
            <person name="McCutchen B."/>
            <person name="Lu A."/>
            <person name="Schepers E."/>
            <person name="Herrmann R."/>
            <person name="Grishin E.V."/>
        </authorList>
    </citation>
    <scope>NUCLEOTIDE SEQUENCE [MRNA]</scope>
    <source>
        <tissue>Venom gland</tissue>
    </source>
</reference>